<feature type="chain" id="PRO_1000077025" description="Queuine tRNA-ribosyltransferase">
    <location>
        <begin position="1"/>
        <end position="380"/>
    </location>
</feature>
<feature type="region of interest" description="RNA binding" evidence="1">
    <location>
        <begin position="251"/>
        <end position="257"/>
    </location>
</feature>
<feature type="region of interest" description="RNA binding; important for wobble base 34 recognition" evidence="1">
    <location>
        <begin position="275"/>
        <end position="279"/>
    </location>
</feature>
<feature type="active site" description="Proton acceptor" evidence="1">
    <location>
        <position position="96"/>
    </location>
</feature>
<feature type="active site" description="Nucleophile" evidence="1">
    <location>
        <position position="270"/>
    </location>
</feature>
<feature type="binding site" evidence="1">
    <location>
        <begin position="96"/>
        <end position="100"/>
    </location>
    <ligand>
        <name>substrate</name>
    </ligand>
</feature>
<feature type="binding site" evidence="1">
    <location>
        <position position="150"/>
    </location>
    <ligand>
        <name>substrate</name>
    </ligand>
</feature>
<feature type="binding site" evidence="1">
    <location>
        <position position="193"/>
    </location>
    <ligand>
        <name>substrate</name>
    </ligand>
</feature>
<feature type="binding site" evidence="1">
    <location>
        <position position="220"/>
    </location>
    <ligand>
        <name>substrate</name>
    </ligand>
</feature>
<feature type="binding site" evidence="1">
    <location>
        <position position="308"/>
    </location>
    <ligand>
        <name>Zn(2+)</name>
        <dbReference type="ChEBI" id="CHEBI:29105"/>
    </ligand>
</feature>
<feature type="binding site" evidence="1">
    <location>
        <position position="310"/>
    </location>
    <ligand>
        <name>Zn(2+)</name>
        <dbReference type="ChEBI" id="CHEBI:29105"/>
    </ligand>
</feature>
<feature type="binding site" evidence="1">
    <location>
        <position position="313"/>
    </location>
    <ligand>
        <name>Zn(2+)</name>
        <dbReference type="ChEBI" id="CHEBI:29105"/>
    </ligand>
</feature>
<feature type="binding site" evidence="1">
    <location>
        <position position="339"/>
    </location>
    <ligand>
        <name>Zn(2+)</name>
        <dbReference type="ChEBI" id="CHEBI:29105"/>
    </ligand>
</feature>
<reference key="1">
    <citation type="journal article" date="2007" name="J. Bacteriol.">
        <title>Genome-wide transcriptional changes in Streptococcus gordonii in response to competence signaling peptide.</title>
        <authorList>
            <person name="Vickerman M.M."/>
            <person name="Iobst S."/>
            <person name="Jesionowski A.M."/>
            <person name="Gill S.R."/>
        </authorList>
    </citation>
    <scope>NUCLEOTIDE SEQUENCE [LARGE SCALE GENOMIC DNA]</scope>
    <source>
        <strain>Challis / ATCC 35105 / BCRC 15272 / CH1 / DL1 / V288</strain>
    </source>
</reference>
<sequence>MSDSPIQYRLIKKEKHTGARLGEIITPHGTFPTPMFMPVGTQATVKTQSPEELKQMGSGIILANTYHLWLRPGDELIARAGGLHKFMNWDQPILTDSGGFQVYSLADSRNITEEGVTFKNHLNGSKMFLSPEKAISIQNNLGSDIMMSFDECPQFYQPYDYVKKSIERTSRWAERGLKAHSRPHDQGLFGIVQGAGFEDLRRQSAQDLVSMDFPGYSIGGLAVGESHEEMNAVLDFTTPLLPENKPRYLMGVGAPDSLIDGVIRGVDMFDCVLPTRIARNGTCMTSEGRLVVKNAQFEEDFTPLDHNCDCYTCTNYTRAYIRHLLKADETFGLRLTSYHNLYFLVNLMKKVRQAIMDDNLLEFREDFMERYGYNRSNRNF</sequence>
<name>TGT_STRGC</name>
<dbReference type="EC" id="2.4.2.29" evidence="1"/>
<dbReference type="EMBL" id="CP000725">
    <property type="protein sequence ID" value="ABV10168.1"/>
    <property type="molecule type" value="Genomic_DNA"/>
</dbReference>
<dbReference type="RefSeq" id="WP_008808170.1">
    <property type="nucleotide sequence ID" value="NC_009785.1"/>
</dbReference>
<dbReference type="SMR" id="A8AUL3"/>
<dbReference type="STRING" id="467705.SGO_0152"/>
<dbReference type="KEGG" id="sgo:SGO_0152"/>
<dbReference type="eggNOG" id="COG0343">
    <property type="taxonomic scope" value="Bacteria"/>
</dbReference>
<dbReference type="HOGENOM" id="CLU_022060_0_1_9"/>
<dbReference type="UniPathway" id="UPA00392"/>
<dbReference type="Proteomes" id="UP000001131">
    <property type="component" value="Chromosome"/>
</dbReference>
<dbReference type="GO" id="GO:0005829">
    <property type="term" value="C:cytosol"/>
    <property type="evidence" value="ECO:0007669"/>
    <property type="project" value="TreeGrafter"/>
</dbReference>
<dbReference type="GO" id="GO:0046872">
    <property type="term" value="F:metal ion binding"/>
    <property type="evidence" value="ECO:0007669"/>
    <property type="project" value="UniProtKB-KW"/>
</dbReference>
<dbReference type="GO" id="GO:0008479">
    <property type="term" value="F:tRNA-guanosine(34) queuine transglycosylase activity"/>
    <property type="evidence" value="ECO:0007669"/>
    <property type="project" value="UniProtKB-UniRule"/>
</dbReference>
<dbReference type="GO" id="GO:0008616">
    <property type="term" value="P:queuosine biosynthetic process"/>
    <property type="evidence" value="ECO:0007669"/>
    <property type="project" value="UniProtKB-UniRule"/>
</dbReference>
<dbReference type="GO" id="GO:0002099">
    <property type="term" value="P:tRNA wobble guanine modification"/>
    <property type="evidence" value="ECO:0007669"/>
    <property type="project" value="TreeGrafter"/>
</dbReference>
<dbReference type="GO" id="GO:0101030">
    <property type="term" value="P:tRNA-guanine transglycosylation"/>
    <property type="evidence" value="ECO:0007669"/>
    <property type="project" value="InterPro"/>
</dbReference>
<dbReference type="FunFam" id="3.20.20.105:FF:000001">
    <property type="entry name" value="Queuine tRNA-ribosyltransferase"/>
    <property type="match status" value="1"/>
</dbReference>
<dbReference type="Gene3D" id="3.20.20.105">
    <property type="entry name" value="Queuine tRNA-ribosyltransferase-like"/>
    <property type="match status" value="1"/>
</dbReference>
<dbReference type="HAMAP" id="MF_00168">
    <property type="entry name" value="Q_tRNA_Tgt"/>
    <property type="match status" value="1"/>
</dbReference>
<dbReference type="InterPro" id="IPR050076">
    <property type="entry name" value="ArchSynthase1/Queuine_TRR"/>
</dbReference>
<dbReference type="InterPro" id="IPR004803">
    <property type="entry name" value="TGT"/>
</dbReference>
<dbReference type="InterPro" id="IPR036511">
    <property type="entry name" value="TGT-like_sf"/>
</dbReference>
<dbReference type="InterPro" id="IPR002616">
    <property type="entry name" value="tRNA_ribo_trans-like"/>
</dbReference>
<dbReference type="NCBIfam" id="TIGR00430">
    <property type="entry name" value="Q_tRNA_tgt"/>
    <property type="match status" value="1"/>
</dbReference>
<dbReference type="NCBIfam" id="TIGR00449">
    <property type="entry name" value="tgt_general"/>
    <property type="match status" value="1"/>
</dbReference>
<dbReference type="PANTHER" id="PTHR46499">
    <property type="entry name" value="QUEUINE TRNA-RIBOSYLTRANSFERASE"/>
    <property type="match status" value="1"/>
</dbReference>
<dbReference type="PANTHER" id="PTHR46499:SF1">
    <property type="entry name" value="QUEUINE TRNA-RIBOSYLTRANSFERASE"/>
    <property type="match status" value="1"/>
</dbReference>
<dbReference type="Pfam" id="PF01702">
    <property type="entry name" value="TGT"/>
    <property type="match status" value="1"/>
</dbReference>
<dbReference type="SUPFAM" id="SSF51713">
    <property type="entry name" value="tRNA-guanine transglycosylase"/>
    <property type="match status" value="1"/>
</dbReference>
<gene>
    <name evidence="1" type="primary">tgt</name>
    <name type="ordered locus">SGO_0152</name>
</gene>
<proteinExistence type="inferred from homology"/>
<organism>
    <name type="scientific">Streptococcus gordonii (strain Challis / ATCC 35105 / BCRC 15272 / CH1 / DL1 / V288)</name>
    <dbReference type="NCBI Taxonomy" id="467705"/>
    <lineage>
        <taxon>Bacteria</taxon>
        <taxon>Bacillati</taxon>
        <taxon>Bacillota</taxon>
        <taxon>Bacilli</taxon>
        <taxon>Lactobacillales</taxon>
        <taxon>Streptococcaceae</taxon>
        <taxon>Streptococcus</taxon>
    </lineage>
</organism>
<protein>
    <recommendedName>
        <fullName evidence="1">Queuine tRNA-ribosyltransferase</fullName>
        <ecNumber evidence="1">2.4.2.29</ecNumber>
    </recommendedName>
    <alternativeName>
        <fullName evidence="1">Guanine insertion enzyme</fullName>
    </alternativeName>
    <alternativeName>
        <fullName evidence="1">tRNA-guanine transglycosylase</fullName>
    </alternativeName>
</protein>
<evidence type="ECO:0000255" key="1">
    <source>
        <dbReference type="HAMAP-Rule" id="MF_00168"/>
    </source>
</evidence>
<comment type="function">
    <text evidence="1">Catalyzes the base-exchange of a guanine (G) residue with the queuine precursor 7-aminomethyl-7-deazaguanine (PreQ1) at position 34 (anticodon wobble position) in tRNAs with GU(N) anticodons (tRNA-Asp, -Asn, -His and -Tyr). Catalysis occurs through a double-displacement mechanism. The nucleophile active site attacks the C1' of nucleotide 34 to detach the guanine base from the RNA, forming a covalent enzyme-RNA intermediate. The proton acceptor active site deprotonates the incoming PreQ1, allowing a nucleophilic attack on the C1' of the ribose to form the product. After dissociation, two additional enzymatic reactions on the tRNA convert PreQ1 to queuine (Q), resulting in the hypermodified nucleoside queuosine (7-(((4,5-cis-dihydroxy-2-cyclopenten-1-yl)amino)methyl)-7-deazaguanosine).</text>
</comment>
<comment type="catalytic activity">
    <reaction evidence="1">
        <text>7-aminomethyl-7-carbaguanine + guanosine(34) in tRNA = 7-aminomethyl-7-carbaguanosine(34) in tRNA + guanine</text>
        <dbReference type="Rhea" id="RHEA:24104"/>
        <dbReference type="Rhea" id="RHEA-COMP:10341"/>
        <dbReference type="Rhea" id="RHEA-COMP:10342"/>
        <dbReference type="ChEBI" id="CHEBI:16235"/>
        <dbReference type="ChEBI" id="CHEBI:58703"/>
        <dbReference type="ChEBI" id="CHEBI:74269"/>
        <dbReference type="ChEBI" id="CHEBI:82833"/>
        <dbReference type="EC" id="2.4.2.29"/>
    </reaction>
</comment>
<comment type="cofactor">
    <cofactor evidence="1">
        <name>Zn(2+)</name>
        <dbReference type="ChEBI" id="CHEBI:29105"/>
    </cofactor>
    <text evidence="1">Binds 1 zinc ion per subunit.</text>
</comment>
<comment type="pathway">
    <text evidence="1">tRNA modification; tRNA-queuosine biosynthesis.</text>
</comment>
<comment type="subunit">
    <text evidence="1">Homodimer. Within each dimer, one monomer is responsible for RNA recognition and catalysis, while the other monomer binds to the replacement base PreQ1.</text>
</comment>
<comment type="similarity">
    <text evidence="1">Belongs to the queuine tRNA-ribosyltransferase family.</text>
</comment>
<accession>A8AUL3</accession>
<keyword id="KW-0328">Glycosyltransferase</keyword>
<keyword id="KW-0479">Metal-binding</keyword>
<keyword id="KW-0671">Queuosine biosynthesis</keyword>
<keyword id="KW-1185">Reference proteome</keyword>
<keyword id="KW-0808">Transferase</keyword>
<keyword id="KW-0819">tRNA processing</keyword>
<keyword id="KW-0862">Zinc</keyword>